<gene>
    <name evidence="1" type="primary">rplM</name>
    <name type="ordered locus">ECS88_3607</name>
</gene>
<reference key="1">
    <citation type="journal article" date="2009" name="PLoS Genet.">
        <title>Organised genome dynamics in the Escherichia coli species results in highly diverse adaptive paths.</title>
        <authorList>
            <person name="Touchon M."/>
            <person name="Hoede C."/>
            <person name="Tenaillon O."/>
            <person name="Barbe V."/>
            <person name="Baeriswyl S."/>
            <person name="Bidet P."/>
            <person name="Bingen E."/>
            <person name="Bonacorsi S."/>
            <person name="Bouchier C."/>
            <person name="Bouvet O."/>
            <person name="Calteau A."/>
            <person name="Chiapello H."/>
            <person name="Clermont O."/>
            <person name="Cruveiller S."/>
            <person name="Danchin A."/>
            <person name="Diard M."/>
            <person name="Dossat C."/>
            <person name="Karoui M.E."/>
            <person name="Frapy E."/>
            <person name="Garry L."/>
            <person name="Ghigo J.M."/>
            <person name="Gilles A.M."/>
            <person name="Johnson J."/>
            <person name="Le Bouguenec C."/>
            <person name="Lescat M."/>
            <person name="Mangenot S."/>
            <person name="Martinez-Jehanne V."/>
            <person name="Matic I."/>
            <person name="Nassif X."/>
            <person name="Oztas S."/>
            <person name="Petit M.A."/>
            <person name="Pichon C."/>
            <person name="Rouy Z."/>
            <person name="Ruf C.S."/>
            <person name="Schneider D."/>
            <person name="Tourret J."/>
            <person name="Vacherie B."/>
            <person name="Vallenet D."/>
            <person name="Medigue C."/>
            <person name="Rocha E.P.C."/>
            <person name="Denamur E."/>
        </authorList>
    </citation>
    <scope>NUCLEOTIDE SEQUENCE [LARGE SCALE GENOMIC DNA]</scope>
    <source>
        <strain>S88 / ExPEC</strain>
    </source>
</reference>
<dbReference type="EMBL" id="CU928161">
    <property type="protein sequence ID" value="CAR04833.1"/>
    <property type="molecule type" value="Genomic_DNA"/>
</dbReference>
<dbReference type="RefSeq" id="WP_000847559.1">
    <property type="nucleotide sequence ID" value="NC_011742.1"/>
</dbReference>
<dbReference type="EMDB" id="EMD-7970"/>
<dbReference type="EMDB" id="EMD-8826"/>
<dbReference type="EMDB" id="EMD-8829"/>
<dbReference type="SMR" id="B7MBZ2"/>
<dbReference type="IntAct" id="B7MBZ2">
    <property type="interactions" value="1"/>
</dbReference>
<dbReference type="GeneID" id="89518067"/>
<dbReference type="KEGG" id="ecz:ECS88_3607"/>
<dbReference type="HOGENOM" id="CLU_082184_2_2_6"/>
<dbReference type="Proteomes" id="UP000000747">
    <property type="component" value="Chromosome"/>
</dbReference>
<dbReference type="GO" id="GO:0022625">
    <property type="term" value="C:cytosolic large ribosomal subunit"/>
    <property type="evidence" value="ECO:0007669"/>
    <property type="project" value="TreeGrafter"/>
</dbReference>
<dbReference type="GO" id="GO:0003729">
    <property type="term" value="F:mRNA binding"/>
    <property type="evidence" value="ECO:0007669"/>
    <property type="project" value="TreeGrafter"/>
</dbReference>
<dbReference type="GO" id="GO:0003735">
    <property type="term" value="F:structural constituent of ribosome"/>
    <property type="evidence" value="ECO:0007669"/>
    <property type="project" value="InterPro"/>
</dbReference>
<dbReference type="GO" id="GO:0017148">
    <property type="term" value="P:negative regulation of translation"/>
    <property type="evidence" value="ECO:0007669"/>
    <property type="project" value="TreeGrafter"/>
</dbReference>
<dbReference type="GO" id="GO:0006412">
    <property type="term" value="P:translation"/>
    <property type="evidence" value="ECO:0007669"/>
    <property type="project" value="UniProtKB-UniRule"/>
</dbReference>
<dbReference type="CDD" id="cd00392">
    <property type="entry name" value="Ribosomal_L13"/>
    <property type="match status" value="1"/>
</dbReference>
<dbReference type="FunFam" id="3.90.1180.10:FF:000001">
    <property type="entry name" value="50S ribosomal protein L13"/>
    <property type="match status" value="1"/>
</dbReference>
<dbReference type="Gene3D" id="3.90.1180.10">
    <property type="entry name" value="Ribosomal protein L13"/>
    <property type="match status" value="1"/>
</dbReference>
<dbReference type="HAMAP" id="MF_01366">
    <property type="entry name" value="Ribosomal_uL13"/>
    <property type="match status" value="1"/>
</dbReference>
<dbReference type="InterPro" id="IPR005822">
    <property type="entry name" value="Ribosomal_uL13"/>
</dbReference>
<dbReference type="InterPro" id="IPR005823">
    <property type="entry name" value="Ribosomal_uL13_bac-type"/>
</dbReference>
<dbReference type="InterPro" id="IPR023563">
    <property type="entry name" value="Ribosomal_uL13_CS"/>
</dbReference>
<dbReference type="InterPro" id="IPR036899">
    <property type="entry name" value="Ribosomal_uL13_sf"/>
</dbReference>
<dbReference type="NCBIfam" id="TIGR01066">
    <property type="entry name" value="rplM_bact"/>
    <property type="match status" value="1"/>
</dbReference>
<dbReference type="PANTHER" id="PTHR11545:SF2">
    <property type="entry name" value="LARGE RIBOSOMAL SUBUNIT PROTEIN UL13M"/>
    <property type="match status" value="1"/>
</dbReference>
<dbReference type="PANTHER" id="PTHR11545">
    <property type="entry name" value="RIBOSOMAL PROTEIN L13"/>
    <property type="match status" value="1"/>
</dbReference>
<dbReference type="Pfam" id="PF00572">
    <property type="entry name" value="Ribosomal_L13"/>
    <property type="match status" value="1"/>
</dbReference>
<dbReference type="PIRSF" id="PIRSF002181">
    <property type="entry name" value="Ribosomal_L13"/>
    <property type="match status" value="1"/>
</dbReference>
<dbReference type="SUPFAM" id="SSF52161">
    <property type="entry name" value="Ribosomal protein L13"/>
    <property type="match status" value="1"/>
</dbReference>
<dbReference type="PROSITE" id="PS00783">
    <property type="entry name" value="RIBOSOMAL_L13"/>
    <property type="match status" value="1"/>
</dbReference>
<feature type="chain" id="PRO_1000144120" description="Large ribosomal subunit protein uL13">
    <location>
        <begin position="1"/>
        <end position="142"/>
    </location>
</feature>
<sequence>MKTFTAKPETVKRDWYVVDATGKTLGRLATELARRLRGKHKAEYTPHVDTGDYIIVLNADKVAVTGNKRTDKVYYHHTGHIGGIKQATFEEMIARRPERVIEIAVKGMLPKGPLGRAMFRKLKVYAGNEHNHAAQQPQVLDI</sequence>
<evidence type="ECO:0000255" key="1">
    <source>
        <dbReference type="HAMAP-Rule" id="MF_01366"/>
    </source>
</evidence>
<evidence type="ECO:0000305" key="2"/>
<name>RL13_ECO45</name>
<organism>
    <name type="scientific">Escherichia coli O45:K1 (strain S88 / ExPEC)</name>
    <dbReference type="NCBI Taxonomy" id="585035"/>
    <lineage>
        <taxon>Bacteria</taxon>
        <taxon>Pseudomonadati</taxon>
        <taxon>Pseudomonadota</taxon>
        <taxon>Gammaproteobacteria</taxon>
        <taxon>Enterobacterales</taxon>
        <taxon>Enterobacteriaceae</taxon>
        <taxon>Escherichia</taxon>
    </lineage>
</organism>
<keyword id="KW-1185">Reference proteome</keyword>
<keyword id="KW-0687">Ribonucleoprotein</keyword>
<keyword id="KW-0689">Ribosomal protein</keyword>
<comment type="function">
    <text evidence="1">This protein is one of the early assembly proteins of the 50S ribosomal subunit, although it is not seen to bind rRNA by itself. It is important during the early stages of 50S assembly.</text>
</comment>
<comment type="subunit">
    <text evidence="1">Part of the 50S ribosomal subunit.</text>
</comment>
<comment type="similarity">
    <text evidence="1">Belongs to the universal ribosomal protein uL13 family.</text>
</comment>
<protein>
    <recommendedName>
        <fullName evidence="1">Large ribosomal subunit protein uL13</fullName>
    </recommendedName>
    <alternativeName>
        <fullName evidence="2">50S ribosomal protein L13</fullName>
    </alternativeName>
</protein>
<accession>B7MBZ2</accession>
<proteinExistence type="inferred from homology"/>